<gene>
    <name evidence="1" type="primary">cysS</name>
    <name type="ordered locus">CPE2427</name>
</gene>
<comment type="catalytic activity">
    <reaction evidence="1">
        <text>tRNA(Cys) + L-cysteine + ATP = L-cysteinyl-tRNA(Cys) + AMP + diphosphate</text>
        <dbReference type="Rhea" id="RHEA:17773"/>
        <dbReference type="Rhea" id="RHEA-COMP:9661"/>
        <dbReference type="Rhea" id="RHEA-COMP:9679"/>
        <dbReference type="ChEBI" id="CHEBI:30616"/>
        <dbReference type="ChEBI" id="CHEBI:33019"/>
        <dbReference type="ChEBI" id="CHEBI:35235"/>
        <dbReference type="ChEBI" id="CHEBI:78442"/>
        <dbReference type="ChEBI" id="CHEBI:78517"/>
        <dbReference type="ChEBI" id="CHEBI:456215"/>
        <dbReference type="EC" id="6.1.1.16"/>
    </reaction>
</comment>
<comment type="cofactor">
    <cofactor evidence="1">
        <name>Zn(2+)</name>
        <dbReference type="ChEBI" id="CHEBI:29105"/>
    </cofactor>
    <text evidence="1">Binds 1 zinc ion per subunit.</text>
</comment>
<comment type="subunit">
    <text evidence="1">Monomer.</text>
</comment>
<comment type="subcellular location">
    <subcellularLocation>
        <location evidence="1">Cytoplasm</location>
    </subcellularLocation>
</comment>
<comment type="similarity">
    <text evidence="1">Belongs to the class-I aminoacyl-tRNA synthetase family.</text>
</comment>
<evidence type="ECO:0000255" key="1">
    <source>
        <dbReference type="HAMAP-Rule" id="MF_00041"/>
    </source>
</evidence>
<protein>
    <recommendedName>
        <fullName evidence="1">Cysteine--tRNA ligase</fullName>
        <ecNumber evidence="1">6.1.1.16</ecNumber>
    </recommendedName>
    <alternativeName>
        <fullName evidence="1">Cysteinyl-tRNA synthetase</fullName>
        <shortName evidence="1">CysRS</shortName>
    </alternativeName>
</protein>
<organism>
    <name type="scientific">Clostridium perfringens (strain 13 / Type A)</name>
    <dbReference type="NCBI Taxonomy" id="195102"/>
    <lineage>
        <taxon>Bacteria</taxon>
        <taxon>Bacillati</taxon>
        <taxon>Bacillota</taxon>
        <taxon>Clostridia</taxon>
        <taxon>Eubacteriales</taxon>
        <taxon>Clostridiaceae</taxon>
        <taxon>Clostridium</taxon>
    </lineage>
</organism>
<dbReference type="EC" id="6.1.1.16" evidence="1"/>
<dbReference type="EMBL" id="BA000016">
    <property type="protein sequence ID" value="BAB82133.1"/>
    <property type="molecule type" value="Genomic_DNA"/>
</dbReference>
<dbReference type="SMR" id="Q8XHQ5"/>
<dbReference type="STRING" id="195102.gene:10491745"/>
<dbReference type="KEGG" id="cpe:CPE2427"/>
<dbReference type="HOGENOM" id="CLU_013528_0_1_9"/>
<dbReference type="Proteomes" id="UP000000818">
    <property type="component" value="Chromosome"/>
</dbReference>
<dbReference type="GO" id="GO:0005829">
    <property type="term" value="C:cytosol"/>
    <property type="evidence" value="ECO:0007669"/>
    <property type="project" value="TreeGrafter"/>
</dbReference>
<dbReference type="GO" id="GO:0005524">
    <property type="term" value="F:ATP binding"/>
    <property type="evidence" value="ECO:0007669"/>
    <property type="project" value="UniProtKB-UniRule"/>
</dbReference>
<dbReference type="GO" id="GO:0004817">
    <property type="term" value="F:cysteine-tRNA ligase activity"/>
    <property type="evidence" value="ECO:0007669"/>
    <property type="project" value="UniProtKB-UniRule"/>
</dbReference>
<dbReference type="GO" id="GO:0008270">
    <property type="term" value="F:zinc ion binding"/>
    <property type="evidence" value="ECO:0007669"/>
    <property type="project" value="UniProtKB-UniRule"/>
</dbReference>
<dbReference type="GO" id="GO:0006423">
    <property type="term" value="P:cysteinyl-tRNA aminoacylation"/>
    <property type="evidence" value="ECO:0007669"/>
    <property type="project" value="UniProtKB-UniRule"/>
</dbReference>
<dbReference type="CDD" id="cd00672">
    <property type="entry name" value="CysRS_core"/>
    <property type="match status" value="1"/>
</dbReference>
<dbReference type="FunFam" id="3.40.50.620:FF:000009">
    <property type="entry name" value="Cysteine--tRNA ligase"/>
    <property type="match status" value="1"/>
</dbReference>
<dbReference type="Gene3D" id="1.20.120.1910">
    <property type="entry name" value="Cysteine-tRNA ligase, C-terminal anti-codon recognition domain"/>
    <property type="match status" value="1"/>
</dbReference>
<dbReference type="Gene3D" id="3.40.50.620">
    <property type="entry name" value="HUPs"/>
    <property type="match status" value="1"/>
</dbReference>
<dbReference type="HAMAP" id="MF_00041">
    <property type="entry name" value="Cys_tRNA_synth"/>
    <property type="match status" value="1"/>
</dbReference>
<dbReference type="InterPro" id="IPR015803">
    <property type="entry name" value="Cys-tRNA-ligase"/>
</dbReference>
<dbReference type="InterPro" id="IPR015273">
    <property type="entry name" value="Cys-tRNA-synt_Ia_DALR"/>
</dbReference>
<dbReference type="InterPro" id="IPR024909">
    <property type="entry name" value="Cys-tRNA/MSH_ligase"/>
</dbReference>
<dbReference type="InterPro" id="IPR056411">
    <property type="entry name" value="CysS_C"/>
</dbReference>
<dbReference type="InterPro" id="IPR014729">
    <property type="entry name" value="Rossmann-like_a/b/a_fold"/>
</dbReference>
<dbReference type="InterPro" id="IPR032678">
    <property type="entry name" value="tRNA-synt_1_cat_dom"/>
</dbReference>
<dbReference type="InterPro" id="IPR009080">
    <property type="entry name" value="tRNAsynth_Ia_anticodon-bd"/>
</dbReference>
<dbReference type="NCBIfam" id="TIGR00435">
    <property type="entry name" value="cysS"/>
    <property type="match status" value="1"/>
</dbReference>
<dbReference type="PANTHER" id="PTHR10890:SF3">
    <property type="entry name" value="CYSTEINE--TRNA LIGASE, CYTOPLASMIC"/>
    <property type="match status" value="1"/>
</dbReference>
<dbReference type="PANTHER" id="PTHR10890">
    <property type="entry name" value="CYSTEINYL-TRNA SYNTHETASE"/>
    <property type="match status" value="1"/>
</dbReference>
<dbReference type="Pfam" id="PF23493">
    <property type="entry name" value="CysS_C"/>
    <property type="match status" value="1"/>
</dbReference>
<dbReference type="Pfam" id="PF09190">
    <property type="entry name" value="DALR_2"/>
    <property type="match status" value="1"/>
</dbReference>
<dbReference type="Pfam" id="PF01406">
    <property type="entry name" value="tRNA-synt_1e"/>
    <property type="match status" value="1"/>
</dbReference>
<dbReference type="PRINTS" id="PR00983">
    <property type="entry name" value="TRNASYNTHCYS"/>
</dbReference>
<dbReference type="SMART" id="SM00840">
    <property type="entry name" value="DALR_2"/>
    <property type="match status" value="1"/>
</dbReference>
<dbReference type="SUPFAM" id="SSF47323">
    <property type="entry name" value="Anticodon-binding domain of a subclass of class I aminoacyl-tRNA synthetases"/>
    <property type="match status" value="1"/>
</dbReference>
<dbReference type="SUPFAM" id="SSF52374">
    <property type="entry name" value="Nucleotidylyl transferase"/>
    <property type="match status" value="1"/>
</dbReference>
<accession>Q8XHQ5</accession>
<proteinExistence type="inferred from homology"/>
<name>SYC_CLOPE</name>
<feature type="chain" id="PRO_0000159382" description="Cysteine--tRNA ligase">
    <location>
        <begin position="1"/>
        <end position="466"/>
    </location>
</feature>
<feature type="short sequence motif" description="'HIGH' region">
    <location>
        <begin position="30"/>
        <end position="40"/>
    </location>
</feature>
<feature type="short sequence motif" description="'KMSKS' region">
    <location>
        <begin position="265"/>
        <end position="269"/>
    </location>
</feature>
<feature type="binding site" evidence="1">
    <location>
        <position position="28"/>
    </location>
    <ligand>
        <name>Zn(2+)</name>
        <dbReference type="ChEBI" id="CHEBI:29105"/>
    </ligand>
</feature>
<feature type="binding site" evidence="1">
    <location>
        <position position="208"/>
    </location>
    <ligand>
        <name>Zn(2+)</name>
        <dbReference type="ChEBI" id="CHEBI:29105"/>
    </ligand>
</feature>
<feature type="binding site" evidence="1">
    <location>
        <position position="233"/>
    </location>
    <ligand>
        <name>Zn(2+)</name>
        <dbReference type="ChEBI" id="CHEBI:29105"/>
    </ligand>
</feature>
<feature type="binding site" evidence="1">
    <location>
        <position position="237"/>
    </location>
    <ligand>
        <name>Zn(2+)</name>
        <dbReference type="ChEBI" id="CHEBI:29105"/>
    </ligand>
</feature>
<feature type="binding site" evidence="1">
    <location>
        <position position="268"/>
    </location>
    <ligand>
        <name>ATP</name>
        <dbReference type="ChEBI" id="CHEBI:30616"/>
    </ligand>
</feature>
<reference key="1">
    <citation type="journal article" date="2002" name="Proc. Natl. Acad. Sci. U.S.A.">
        <title>Complete genome sequence of Clostridium perfringens, an anaerobic flesh-eater.</title>
        <authorList>
            <person name="Shimizu T."/>
            <person name="Ohtani K."/>
            <person name="Hirakawa H."/>
            <person name="Ohshima K."/>
            <person name="Yamashita A."/>
            <person name="Shiba T."/>
            <person name="Ogasawara N."/>
            <person name="Hattori M."/>
            <person name="Kuhara S."/>
            <person name="Hayashi H."/>
        </authorList>
    </citation>
    <scope>NUCLEOTIDE SEQUENCE [LARGE SCALE GENOMIC DNA]</scope>
    <source>
        <strain>13 / Type A</strain>
    </source>
</reference>
<keyword id="KW-0030">Aminoacyl-tRNA synthetase</keyword>
<keyword id="KW-0067">ATP-binding</keyword>
<keyword id="KW-0963">Cytoplasm</keyword>
<keyword id="KW-0436">Ligase</keyword>
<keyword id="KW-0479">Metal-binding</keyword>
<keyword id="KW-0547">Nucleotide-binding</keyword>
<keyword id="KW-0648">Protein biosynthesis</keyword>
<keyword id="KW-1185">Reference proteome</keyword>
<keyword id="KW-0862">Zinc</keyword>
<sequence length="466" mass="53650">MIKVYNTLNKKKEEFIPLTPGEVKMYVCGPTVYNFFHIGNGRTFIVFDTIRRYFEYRGFKVDFVQNFTDIDDKMIKKANEEGTTVKKIGDTYIKEYYQDADALNIERATVNPRATEFIGEIIKFVKGLVDKGYAYEVDGDVYFSTKKFEGYGKLSGQNIEDLQSGARISVDERKKDPMDFAIWKAQKPGEPAWNSPWGMGRPGWHIECSCMAKKLLGETIDIHAGGSDLKFPHHENEIAQSEALTGEPFARYWLHSAFVNVNNEKMSKSLNNFFTAREILERYDADVIRFLMLSAHYRQQLNFSEDLLESAKASVERIYNAIGNLENLIDEVSREEMNEEEKAYLESLNKYKEKYIEKMDDDFNTADAITAIFDLIKDTNTNITIDSSKELAQKALELIRELGAPLGMFQKSTKGNLEEEIEALIAKRQQARKDRDFALADKIRDELKDRGIVLEDTPQGVRWKMI</sequence>